<sequence>MDLENKVKKMGLGHEQGFGAPCLKCKEKCEGFELHFWRKICRNCKCGQEEHDVLLSNEEDRKVGKLFEDTKYTTLIAKLKSDGIPMYKRNVMILTNPVAAKKNVSINTVTYEWAPPVHNQALARQYMQMLPKEKQPVAGSEGAQYRKKQLAKQLPAHDQDPSKCHELSPREVKEMEQFVKKYKSEALGVGDVKLPCEMDAQGPKKMYIPGGDRSTPPAAGAMEDKSAEHKSTQYSCYCCKLNMKEGDPAIYAERAGYDKLWHPACFVCSVCHELLVDMIYFWKNEKLYCGRHYCDSEKPRCAGCDELIFSNEYTQAENQNWHLKHFCCFDCDSILAGEIYVMVNDKPVCKPCYVKNHAVVCQGCHNAIDPEVQRVTYNNFSWHASTECFLCSCCSKCLIGQKFMPVEGMVFCSVECKKMMS</sequence>
<reference key="1">
    <citation type="submission" date="2006-09" db="EMBL/GenBank/DDBJ databases">
        <title>NISC comparative sequencing initiative.</title>
        <authorList>
            <person name="Antonellis A."/>
            <person name="Ayele K."/>
            <person name="Benjamin B."/>
            <person name="Blakesley R.W."/>
            <person name="Boakye A."/>
            <person name="Bouffard G.G."/>
            <person name="Brinkley C."/>
            <person name="Brooks S."/>
            <person name="Chu G."/>
            <person name="Coleman H."/>
            <person name="Engle J."/>
            <person name="Gestole M."/>
            <person name="Greene A."/>
            <person name="Guan X."/>
            <person name="Gupta J."/>
            <person name="Haghighi P."/>
            <person name="Han J."/>
            <person name="Hansen N."/>
            <person name="Ho S.-L."/>
            <person name="Hu P."/>
            <person name="Hunter G."/>
            <person name="Hurle B."/>
            <person name="Idol J.R."/>
            <person name="Kwong P."/>
            <person name="Laric P."/>
            <person name="Larson S."/>
            <person name="Lee-Lin S.-Q."/>
            <person name="Legaspi R."/>
            <person name="Madden M."/>
            <person name="Maduro Q.L."/>
            <person name="Maduro V.B."/>
            <person name="Margulies E.H."/>
            <person name="Masiello C."/>
            <person name="Maskeri B."/>
            <person name="McDowell J."/>
            <person name="Mojidi H.A."/>
            <person name="Mullikin J.C."/>
            <person name="Oestreicher J.S."/>
            <person name="Park M."/>
            <person name="Portnoy M.E."/>
            <person name="Prasad A."/>
            <person name="Puri O."/>
            <person name="Reddix-Dugue N."/>
            <person name="Schandler K."/>
            <person name="Schueler M.G."/>
            <person name="Sison C."/>
            <person name="Stantripop S."/>
            <person name="Stephen E."/>
            <person name="Taye A."/>
            <person name="Thomas J.W."/>
            <person name="Thomas P.J."/>
            <person name="Tsipouri V."/>
            <person name="Ung L."/>
            <person name="Vogt J.L."/>
            <person name="Wetherby K.D."/>
            <person name="Young A."/>
            <person name="Green E.D."/>
        </authorList>
    </citation>
    <scope>NUCLEOTIDE SEQUENCE [LARGE SCALE GENOMIC DNA]</scope>
</reference>
<accession>Q09YI0</accession>
<dbReference type="EMBL" id="DP000180">
    <property type="protein sequence ID" value="ABI75300.1"/>
    <property type="molecule type" value="Genomic_DNA"/>
</dbReference>
<dbReference type="RefSeq" id="XP_003921113.1">
    <property type="nucleotide sequence ID" value="XM_003921064.3"/>
</dbReference>
<dbReference type="SMR" id="Q09YI0"/>
<dbReference type="STRING" id="39432.ENSSBOP00000030752"/>
<dbReference type="Ensembl" id="ENSSBOT00000047632.1">
    <property type="protein sequence ID" value="ENSSBOP00000030745.1"/>
    <property type="gene ID" value="ENSSBOG00000031613.1"/>
</dbReference>
<dbReference type="GeneID" id="101040506"/>
<dbReference type="KEGG" id="sbq:101040506"/>
<dbReference type="CTD" id="26136"/>
<dbReference type="GeneTree" id="ENSGT00940000155993"/>
<dbReference type="OMA" id="PHMGPHS"/>
<dbReference type="OrthoDB" id="54287at9443"/>
<dbReference type="Proteomes" id="UP000233220">
    <property type="component" value="Unplaced"/>
</dbReference>
<dbReference type="GO" id="GO:0005737">
    <property type="term" value="C:cytoplasm"/>
    <property type="evidence" value="ECO:0000250"/>
    <property type="project" value="UniProtKB"/>
</dbReference>
<dbReference type="GO" id="GO:0005925">
    <property type="term" value="C:focal adhesion"/>
    <property type="evidence" value="ECO:0007669"/>
    <property type="project" value="UniProtKB-SubCell"/>
</dbReference>
<dbReference type="GO" id="GO:0008270">
    <property type="term" value="F:zinc ion binding"/>
    <property type="evidence" value="ECO:0000250"/>
    <property type="project" value="UniProtKB"/>
</dbReference>
<dbReference type="GO" id="GO:0008285">
    <property type="term" value="P:negative regulation of cell population proliferation"/>
    <property type="evidence" value="ECO:0000250"/>
    <property type="project" value="UniProtKB"/>
</dbReference>
<dbReference type="CDD" id="cd09413">
    <property type="entry name" value="LIM1_Testin"/>
    <property type="match status" value="1"/>
</dbReference>
<dbReference type="CDD" id="cd09416">
    <property type="entry name" value="LIM2_Testin"/>
    <property type="match status" value="1"/>
</dbReference>
<dbReference type="CDD" id="cd09419">
    <property type="entry name" value="LIM3_Testin"/>
    <property type="match status" value="1"/>
</dbReference>
<dbReference type="CDD" id="cd09829">
    <property type="entry name" value="PET_testin"/>
    <property type="match status" value="1"/>
</dbReference>
<dbReference type="FunFam" id="2.10.110.10:FF:000061">
    <property type="entry name" value="Testin"/>
    <property type="match status" value="1"/>
</dbReference>
<dbReference type="FunFam" id="2.10.110.10:FF:000065">
    <property type="entry name" value="Testin"/>
    <property type="match status" value="1"/>
</dbReference>
<dbReference type="FunFam" id="2.10.110.10:FF:000005">
    <property type="entry name" value="Testin isoform 1"/>
    <property type="match status" value="1"/>
</dbReference>
<dbReference type="Gene3D" id="2.10.110.10">
    <property type="entry name" value="Cysteine Rich Protein"/>
    <property type="match status" value="3"/>
</dbReference>
<dbReference type="InterPro" id="IPR034958">
    <property type="entry name" value="LIM1_Testin"/>
</dbReference>
<dbReference type="InterPro" id="IPR034959">
    <property type="entry name" value="LIM2_Testin"/>
</dbReference>
<dbReference type="InterPro" id="IPR034960">
    <property type="entry name" value="LIM3_Testin"/>
</dbReference>
<dbReference type="InterPro" id="IPR010442">
    <property type="entry name" value="PET_domain"/>
</dbReference>
<dbReference type="InterPro" id="IPR033724">
    <property type="entry name" value="PET_testin"/>
</dbReference>
<dbReference type="InterPro" id="IPR047120">
    <property type="entry name" value="Pk/Esn/Tes"/>
</dbReference>
<dbReference type="InterPro" id="IPR001781">
    <property type="entry name" value="Znf_LIM"/>
</dbReference>
<dbReference type="PANTHER" id="PTHR24211">
    <property type="entry name" value="LIM DOMAIN-CONTAINING PROTEIN"/>
    <property type="match status" value="1"/>
</dbReference>
<dbReference type="PANTHER" id="PTHR24211:SF1">
    <property type="entry name" value="TESTIN"/>
    <property type="match status" value="1"/>
</dbReference>
<dbReference type="Pfam" id="PF00412">
    <property type="entry name" value="LIM"/>
    <property type="match status" value="3"/>
</dbReference>
<dbReference type="Pfam" id="PF06297">
    <property type="entry name" value="PET"/>
    <property type="match status" value="1"/>
</dbReference>
<dbReference type="SMART" id="SM00132">
    <property type="entry name" value="LIM"/>
    <property type="match status" value="3"/>
</dbReference>
<dbReference type="SUPFAM" id="SSF57716">
    <property type="entry name" value="Glucocorticoid receptor-like (DNA-binding domain)"/>
    <property type="match status" value="2"/>
</dbReference>
<dbReference type="PROSITE" id="PS00478">
    <property type="entry name" value="LIM_DOMAIN_1"/>
    <property type="match status" value="2"/>
</dbReference>
<dbReference type="PROSITE" id="PS50023">
    <property type="entry name" value="LIM_DOMAIN_2"/>
    <property type="match status" value="3"/>
</dbReference>
<dbReference type="PROSITE" id="PS51303">
    <property type="entry name" value="PET"/>
    <property type="match status" value="1"/>
</dbReference>
<organism>
    <name type="scientific">Saimiri boliviensis boliviensis</name>
    <name type="common">Bolivian squirrel monkey</name>
    <dbReference type="NCBI Taxonomy" id="39432"/>
    <lineage>
        <taxon>Eukaryota</taxon>
        <taxon>Metazoa</taxon>
        <taxon>Chordata</taxon>
        <taxon>Craniata</taxon>
        <taxon>Vertebrata</taxon>
        <taxon>Euteleostomi</taxon>
        <taxon>Mammalia</taxon>
        <taxon>Eutheria</taxon>
        <taxon>Euarchontoglires</taxon>
        <taxon>Primates</taxon>
        <taxon>Haplorrhini</taxon>
        <taxon>Platyrrhini</taxon>
        <taxon>Cebidae</taxon>
        <taxon>Saimiriinae</taxon>
        <taxon>Saimiri</taxon>
    </lineage>
</organism>
<comment type="function">
    <text evidence="1">Scaffold protein that may play a role in cell adhesion, cell spreading and in the reorganization of the actin cytoskeleton. Plays a role in the regulation of cell proliferation. May act as a tumor suppressor (By similarity).</text>
</comment>
<comment type="subunit">
    <text evidence="1">Interacts via LIM domain 1 with ZYX. Interacts (via LIM domain 3) with ENAH and VASP. Interacts with ALKBH4, talin, actin, alpha-actinin, GRIP1 and PXN (By similarity). Interacts (via LIM domain 2) with ACTL7A (via N-terminus). Heterodimer with ACTL7A; the heterodimer interacts with ENAH to form a heterotrimer (By similarity).</text>
</comment>
<comment type="subcellular location">
    <subcellularLocation>
        <location evidence="1">Cytoplasm</location>
    </subcellularLocation>
    <subcellularLocation>
        <location evidence="1">Cell junction</location>
        <location evidence="1">Focal adhesion</location>
    </subcellularLocation>
    <text evidence="1">Detected along actin stress fibers.</text>
</comment>
<comment type="domain">
    <text evidence="1">The N-terminal and the C-terminal halves of the protein can associate with each other, thereby hindering interactions with ZYX.</text>
</comment>
<comment type="similarity">
    <text evidence="5">Belongs to the prickle / espinas / testin family.</text>
</comment>
<gene>
    <name type="primary">TES</name>
</gene>
<evidence type="ECO:0000250" key="1"/>
<evidence type="ECO:0000255" key="2">
    <source>
        <dbReference type="PROSITE-ProRule" id="PRU00125"/>
    </source>
</evidence>
<evidence type="ECO:0000255" key="3">
    <source>
        <dbReference type="PROSITE-ProRule" id="PRU00636"/>
    </source>
</evidence>
<evidence type="ECO:0000256" key="4">
    <source>
        <dbReference type="SAM" id="MobiDB-lite"/>
    </source>
</evidence>
<evidence type="ECO:0000305" key="5"/>
<keyword id="KW-0965">Cell junction</keyword>
<keyword id="KW-0963">Cytoplasm</keyword>
<keyword id="KW-0440">LIM domain</keyword>
<keyword id="KW-0479">Metal-binding</keyword>
<keyword id="KW-1185">Reference proteome</keyword>
<keyword id="KW-0677">Repeat</keyword>
<keyword id="KW-0862">Zinc</keyword>
<feature type="chain" id="PRO_0000260337" description="Testin">
    <location>
        <begin position="1"/>
        <end position="421"/>
    </location>
</feature>
<feature type="domain" description="PET" evidence="3">
    <location>
        <begin position="92"/>
        <end position="199"/>
    </location>
</feature>
<feature type="domain" description="LIM zinc-binding 1" evidence="2">
    <location>
        <begin position="234"/>
        <end position="297"/>
    </location>
</feature>
<feature type="domain" description="LIM zinc-binding 2" evidence="2">
    <location>
        <begin position="299"/>
        <end position="359"/>
    </location>
</feature>
<feature type="domain" description="LIM zinc-binding 3" evidence="2">
    <location>
        <begin position="362"/>
        <end position="421"/>
    </location>
</feature>
<feature type="region of interest" description="Disordered" evidence="4">
    <location>
        <begin position="133"/>
        <end position="164"/>
    </location>
</feature>
<feature type="compositionally biased region" description="Basic and acidic residues" evidence="4">
    <location>
        <begin position="155"/>
        <end position="164"/>
    </location>
</feature>
<protein>
    <recommendedName>
        <fullName>Testin</fullName>
    </recommendedName>
</protein>
<name>TES_SAIBB</name>
<proteinExistence type="inferred from homology"/>